<reference key="1">
    <citation type="journal article" date="2000" name="Mech. Dev.">
        <title>A new murine zinc finger gene, Opr.</title>
        <authorList>
            <person name="Furushima K."/>
            <person name="Murata T."/>
            <person name="Matsuo I."/>
            <person name="Aizawa S."/>
        </authorList>
    </citation>
    <scope>NUCLEOTIDE SEQUENCE [MRNA]</scope>
    <scope>DEVELOPMENTAL STAGE</scope>
</reference>
<reference key="2">
    <citation type="journal article" date="2004" name="Dev. Biol.">
        <title>Mouse Zic5 deficiency results in neural tube defects and hypoplasia of cephalic neural crest derivatives.</title>
        <authorList>
            <person name="Inoue T."/>
            <person name="Hatayama M."/>
            <person name="Tohmonda T."/>
            <person name="Itohara S."/>
            <person name="Aruga J."/>
            <person name="Mikoshiba K."/>
        </authorList>
    </citation>
    <scope>NUCLEOTIDE SEQUENCE [MRNA]</scope>
    <scope>DISRUPTION PHENOTYPE</scope>
    <scope>DEVELOPMENTAL STAGE</scope>
</reference>
<reference key="3">
    <citation type="journal article" date="2004" name="Biochem. Biophys. Res. Commun.">
        <title>Molecular properties of Zic4 and Zic5 proteins: functional diversity within Zic family.</title>
        <authorList>
            <person name="Ishiguro A."/>
            <person name="Inoue T."/>
            <person name="Mikoshiba K."/>
            <person name="Aruga J."/>
        </authorList>
    </citation>
    <scope>FUNCTION</scope>
    <scope>DNA-BINDING</scope>
    <scope>SUBCELLULAR LOCATION</scope>
</reference>
<reference key="4">
    <citation type="journal article" date="2010" name="Cell">
        <title>A tissue-specific atlas of mouse protein phosphorylation and expression.</title>
        <authorList>
            <person name="Huttlin E.L."/>
            <person name="Jedrychowski M.P."/>
            <person name="Elias J.E."/>
            <person name="Goswami T."/>
            <person name="Rad R."/>
            <person name="Beausoleil S.A."/>
            <person name="Villen J."/>
            <person name="Haas W."/>
            <person name="Sowa M.E."/>
            <person name="Gygi S.P."/>
        </authorList>
    </citation>
    <scope>PHOSPHORYLATION [LARGE SCALE ANALYSIS] AT SER-537 AND SER-541</scope>
    <scope>IDENTIFICATION BY MASS SPECTROMETRY [LARGE SCALE ANALYSIS]</scope>
    <source>
        <tissue>Brain</tissue>
    </source>
</reference>
<sequence>MMEPPLSKRNPPALRLADLATAQAQQLQNMTGFPVLVGPPAHSQRRAVAMHLHPRDLGTDPGVASTALGPEHMAQASGQGPCPPSQGLPGLFQVPAPAARSVASGTHPGARTHPDGGGSSGAQASAPPPPAPPLPPSQSSSPPPPPPPPPALSGYTATNSGGGSSSGKGHSRDFVLRRDLSATAPAAAMHGAPLGGEQRSGSSSPQHPTPPPHPAGMFISASGTYAGRDGGGSALFPALHDSPGAPGGHPLNGQMRLGLAAAAAAAAELYGRAEPPFAPRSGDAHYGAVAAAAAAALHGYGAVNLNLNLAAAAAAAAAAGPGPHLQHHAPPPAPPPAPAPHPHHPHLPGAAGAFLRYMRQPIKRELICKWLDPEELAGPPASADSGVKPCSKTFGTMHELVNHVTVEHVGGPEQSSHVCFWEDCPREGKPFKAKYKLINHIRVHTGEKPFPCPFPGCGKVFARSENLKIHKRTHTGEKPFKCEFDGCDRKFANSSDRKKHSHVHTSDKPYYCKIRGCDKSYTHPSSLRKHMKIHCKSPPPSPGALGYSSVGTPVGDPLSPVLDPTRSRSSTLSPQVTNLNEWYVCQASGAPSHLHTPSSNGTTSESEDEEMYGNPEVMRTIH</sequence>
<protein>
    <recommendedName>
        <fullName>Zinc finger protein ZIC 5</fullName>
    </recommendedName>
    <alternativeName>
        <fullName>Odd paired-related protein</fullName>
        <shortName>Opa-related protein</shortName>
    </alternativeName>
    <alternativeName>
        <fullName>Zinc finger protein of the cerebellum 5</fullName>
    </alternativeName>
</protein>
<evidence type="ECO:0000250" key="1">
    <source>
        <dbReference type="UniProtKB" id="Q96T25"/>
    </source>
</evidence>
<evidence type="ECO:0000255" key="2">
    <source>
        <dbReference type="PROSITE-ProRule" id="PRU00042"/>
    </source>
</evidence>
<evidence type="ECO:0000256" key="3">
    <source>
        <dbReference type="SAM" id="MobiDB-lite"/>
    </source>
</evidence>
<evidence type="ECO:0000269" key="4">
    <source>
    </source>
</evidence>
<evidence type="ECO:0000269" key="5">
    <source>
    </source>
</evidence>
<evidence type="ECO:0000269" key="6">
    <source>
    </source>
</evidence>
<evidence type="ECO:0000305" key="7"/>
<evidence type="ECO:0007744" key="8">
    <source>
    </source>
</evidence>
<comment type="function">
    <text evidence="6">Essential for neural crest development, converting cells from an epidermal fate to a neural crest cell fate. Binds to DNA.</text>
</comment>
<comment type="subcellular location">
    <subcellularLocation>
        <location evidence="6">Nucleus</location>
    </subcellularLocation>
</comment>
<comment type="developmental stage">
    <text evidence="4 5">Expressed in the embryonic ectoderm before gastrulation, and gradually restricted to the anterior part from the mid to late streak stage. Becomes restricted to the dorsal side of the neural tube at 8 dpc. After neural tube closure, is expressed in the dorsal midline of the entire neural tube and in the roof plate. Also expressed in the developing limb buds.</text>
</comment>
<comment type="disruption phenotype">
    <text evidence="5">Mice exhibited insufficient neural tube closure at the rostral end and malformation of neural-crest-derived facial bones especially the mandible. After birth, mice were significantly smaller than their littermates and most of them died within 2 months.</text>
</comment>
<comment type="similarity">
    <text evidence="7">Belongs to the GLI C2H2-type zinc-finger protein family.</text>
</comment>
<name>ZIC5_MOUSE</name>
<feature type="chain" id="PRO_0000406213" description="Zinc finger protein ZIC 5">
    <location>
        <begin position="1"/>
        <end position="622"/>
    </location>
</feature>
<feature type="zinc finger region" description="C2H2-type 1; degenerate" evidence="2">
    <location>
        <begin position="422"/>
        <end position="444"/>
    </location>
</feature>
<feature type="zinc finger region" description="C2H2-type 2" evidence="2">
    <location>
        <begin position="450"/>
        <end position="474"/>
    </location>
</feature>
<feature type="zinc finger region" description="C2H2-type 3" evidence="2">
    <location>
        <begin position="480"/>
        <end position="504"/>
    </location>
</feature>
<feature type="zinc finger region" description="C2H2-type 4" evidence="2">
    <location>
        <begin position="510"/>
        <end position="534"/>
    </location>
</feature>
<feature type="region of interest" description="Disordered" evidence="3">
    <location>
        <begin position="50"/>
        <end position="171"/>
    </location>
</feature>
<feature type="region of interest" description="Disordered" evidence="3">
    <location>
        <begin position="190"/>
        <end position="223"/>
    </location>
</feature>
<feature type="region of interest" description="Disordered" evidence="3">
    <location>
        <begin position="232"/>
        <end position="251"/>
    </location>
</feature>
<feature type="region of interest" description="Disordered" evidence="3">
    <location>
        <begin position="321"/>
        <end position="349"/>
    </location>
</feature>
<feature type="region of interest" description="Disordered" evidence="3">
    <location>
        <begin position="531"/>
        <end position="573"/>
    </location>
</feature>
<feature type="region of interest" description="Disordered" evidence="3">
    <location>
        <begin position="590"/>
        <end position="622"/>
    </location>
</feature>
<feature type="compositionally biased region" description="Pro residues" evidence="3">
    <location>
        <begin position="126"/>
        <end position="151"/>
    </location>
</feature>
<feature type="compositionally biased region" description="Pro residues" evidence="3">
    <location>
        <begin position="329"/>
        <end position="340"/>
    </location>
</feature>
<feature type="compositionally biased region" description="Polar residues" evidence="3">
    <location>
        <begin position="595"/>
        <end position="604"/>
    </location>
</feature>
<feature type="modified residue" description="Phosphoserine" evidence="8">
    <location>
        <position position="537"/>
    </location>
</feature>
<feature type="modified residue" description="Phosphoserine" evidence="8">
    <location>
        <position position="541"/>
    </location>
</feature>
<feature type="modified residue" description="Phosphoserine" evidence="1">
    <location>
        <position position="559"/>
    </location>
</feature>
<feature type="sequence conflict" description="In Ref. 1; BAB18579." evidence="7" ref="1">
    <original>F</original>
    <variation>S</variation>
    <location>
        <position position="92"/>
    </location>
</feature>
<dbReference type="EMBL" id="AB042155">
    <property type="protein sequence ID" value="BAB18579.1"/>
    <property type="molecule type" value="mRNA"/>
</dbReference>
<dbReference type="EMBL" id="AB114214">
    <property type="protein sequence ID" value="BAC79075.1"/>
    <property type="molecule type" value="mRNA"/>
</dbReference>
<dbReference type="CCDS" id="CCDS27348.1"/>
<dbReference type="RefSeq" id="NP_075363.1">
    <property type="nucleotide sequence ID" value="NM_022987.3"/>
</dbReference>
<dbReference type="SMR" id="Q7TQ40"/>
<dbReference type="FunCoup" id="Q7TQ40">
    <property type="interactions" value="1012"/>
</dbReference>
<dbReference type="STRING" id="10090.ENSMUSP00000035754"/>
<dbReference type="GlyGen" id="Q7TQ40">
    <property type="glycosylation" value="1 site, 1 O-linked glycan (1 site)"/>
</dbReference>
<dbReference type="iPTMnet" id="Q7TQ40"/>
<dbReference type="PhosphoSitePlus" id="Q7TQ40"/>
<dbReference type="PaxDb" id="10090-ENSMUSP00000035754"/>
<dbReference type="ProteomicsDB" id="275065"/>
<dbReference type="DNASU" id="65100"/>
<dbReference type="GeneID" id="65100"/>
<dbReference type="KEGG" id="mmu:65100"/>
<dbReference type="UCSC" id="uc007vbb.2">
    <property type="organism name" value="mouse"/>
</dbReference>
<dbReference type="AGR" id="MGI:1929518"/>
<dbReference type="CTD" id="85416"/>
<dbReference type="MGI" id="MGI:1929518">
    <property type="gene designation" value="Zic5"/>
</dbReference>
<dbReference type="eggNOG" id="KOG1721">
    <property type="taxonomic scope" value="Eukaryota"/>
</dbReference>
<dbReference type="InParanoid" id="Q7TQ40"/>
<dbReference type="OrthoDB" id="3214149at2759"/>
<dbReference type="PhylomeDB" id="Q7TQ40"/>
<dbReference type="TreeFam" id="TF351425"/>
<dbReference type="BioGRID-ORCS" id="65100">
    <property type="hits" value="1 hit in 78 CRISPR screens"/>
</dbReference>
<dbReference type="PRO" id="PR:Q7TQ40"/>
<dbReference type="Proteomes" id="UP000000589">
    <property type="component" value="Unplaced"/>
</dbReference>
<dbReference type="RNAct" id="Q7TQ40">
    <property type="molecule type" value="protein"/>
</dbReference>
<dbReference type="GO" id="GO:0005634">
    <property type="term" value="C:nucleus"/>
    <property type="evidence" value="ECO:0000314"/>
    <property type="project" value="UniProtKB"/>
</dbReference>
<dbReference type="GO" id="GO:0003677">
    <property type="term" value="F:DNA binding"/>
    <property type="evidence" value="ECO:0000314"/>
    <property type="project" value="MGI"/>
</dbReference>
<dbReference type="GO" id="GO:0003700">
    <property type="term" value="F:DNA-binding transcription factor activity"/>
    <property type="evidence" value="ECO:0000314"/>
    <property type="project" value="UniProtKB"/>
</dbReference>
<dbReference type="GO" id="GO:0000977">
    <property type="term" value="F:RNA polymerase II transcription regulatory region sequence-specific DNA binding"/>
    <property type="evidence" value="ECO:0000314"/>
    <property type="project" value="MGI"/>
</dbReference>
<dbReference type="GO" id="GO:0008270">
    <property type="term" value="F:zinc ion binding"/>
    <property type="evidence" value="ECO:0007669"/>
    <property type="project" value="UniProtKB-KW"/>
</dbReference>
<dbReference type="GO" id="GO:0030900">
    <property type="term" value="P:forebrain development"/>
    <property type="evidence" value="ECO:0000315"/>
    <property type="project" value="MGI"/>
</dbReference>
<dbReference type="GO" id="GO:0014033">
    <property type="term" value="P:neural crest cell differentiation"/>
    <property type="evidence" value="ECO:0000315"/>
    <property type="project" value="MGI"/>
</dbReference>
<dbReference type="GO" id="GO:0001843">
    <property type="term" value="P:neural tube closure"/>
    <property type="evidence" value="ECO:0000315"/>
    <property type="project" value="MGI"/>
</dbReference>
<dbReference type="GO" id="GO:0006357">
    <property type="term" value="P:regulation of transcription by RNA polymerase II"/>
    <property type="evidence" value="ECO:0007669"/>
    <property type="project" value="InterPro"/>
</dbReference>
<dbReference type="FunFam" id="3.30.160.60:FF:000035">
    <property type="entry name" value="Zinc finger protein ZIC 1"/>
    <property type="match status" value="1"/>
</dbReference>
<dbReference type="FunFam" id="3.30.160.60:FF:000039">
    <property type="entry name" value="Zinc finger protein ZIC 1"/>
    <property type="match status" value="1"/>
</dbReference>
<dbReference type="FunFam" id="3.30.160.60:FF:000041">
    <property type="entry name" value="Zinc finger protein ZIC 1"/>
    <property type="match status" value="1"/>
</dbReference>
<dbReference type="FunFam" id="3.30.160.60:FF:000050">
    <property type="entry name" value="zinc finger protein ZIC 1"/>
    <property type="match status" value="1"/>
</dbReference>
<dbReference type="Gene3D" id="3.30.160.60">
    <property type="entry name" value="Classic Zinc Finger"/>
    <property type="match status" value="4"/>
</dbReference>
<dbReference type="InterPro" id="IPR043359">
    <property type="entry name" value="GLI-like"/>
</dbReference>
<dbReference type="InterPro" id="IPR056436">
    <property type="entry name" value="Znf-C2H2_ZIC1-5/GLI1-3-like"/>
</dbReference>
<dbReference type="InterPro" id="IPR036236">
    <property type="entry name" value="Znf_C2H2_sf"/>
</dbReference>
<dbReference type="InterPro" id="IPR013087">
    <property type="entry name" value="Znf_C2H2_type"/>
</dbReference>
<dbReference type="InterPro" id="IPR041643">
    <property type="entry name" value="Znf_ZIC"/>
</dbReference>
<dbReference type="PANTHER" id="PTHR45718">
    <property type="entry name" value="TRANSCRIPTIONAL ACTIVATOR CUBITUS INTERRUPTUS"/>
    <property type="match status" value="1"/>
</dbReference>
<dbReference type="PANTHER" id="PTHR45718:SF4">
    <property type="entry name" value="TRANSCRIPTIONAL ACTIVATOR CUBITUS INTERRUPTUS"/>
    <property type="match status" value="1"/>
</dbReference>
<dbReference type="Pfam" id="PF00096">
    <property type="entry name" value="zf-C2H2"/>
    <property type="match status" value="2"/>
</dbReference>
<dbReference type="Pfam" id="PF23561">
    <property type="entry name" value="zf-C2H2_15"/>
    <property type="match status" value="1"/>
</dbReference>
<dbReference type="Pfam" id="PF18366">
    <property type="entry name" value="zf_ZIC"/>
    <property type="match status" value="1"/>
</dbReference>
<dbReference type="SMART" id="SM00355">
    <property type="entry name" value="ZnF_C2H2"/>
    <property type="match status" value="5"/>
</dbReference>
<dbReference type="SUPFAM" id="SSF57667">
    <property type="entry name" value="beta-beta-alpha zinc fingers"/>
    <property type="match status" value="2"/>
</dbReference>
<dbReference type="PROSITE" id="PS00028">
    <property type="entry name" value="ZINC_FINGER_C2H2_1"/>
    <property type="match status" value="3"/>
</dbReference>
<dbReference type="PROSITE" id="PS50157">
    <property type="entry name" value="ZINC_FINGER_C2H2_2"/>
    <property type="match status" value="4"/>
</dbReference>
<keyword id="KW-0217">Developmental protein</keyword>
<keyword id="KW-0221">Differentiation</keyword>
<keyword id="KW-0238">DNA-binding</keyword>
<keyword id="KW-0479">Metal-binding</keyword>
<keyword id="KW-0524">Neurogenesis</keyword>
<keyword id="KW-0539">Nucleus</keyword>
<keyword id="KW-0597">Phosphoprotein</keyword>
<keyword id="KW-1185">Reference proteome</keyword>
<keyword id="KW-0677">Repeat</keyword>
<keyword id="KW-0862">Zinc</keyword>
<keyword id="KW-0863">Zinc-finger</keyword>
<gene>
    <name type="primary">Zic5</name>
    <name type="synonym">Opr</name>
</gene>
<proteinExistence type="evidence at protein level"/>
<organism>
    <name type="scientific">Mus musculus</name>
    <name type="common">Mouse</name>
    <dbReference type="NCBI Taxonomy" id="10090"/>
    <lineage>
        <taxon>Eukaryota</taxon>
        <taxon>Metazoa</taxon>
        <taxon>Chordata</taxon>
        <taxon>Craniata</taxon>
        <taxon>Vertebrata</taxon>
        <taxon>Euteleostomi</taxon>
        <taxon>Mammalia</taxon>
        <taxon>Eutheria</taxon>
        <taxon>Euarchontoglires</taxon>
        <taxon>Glires</taxon>
        <taxon>Rodentia</taxon>
        <taxon>Myomorpha</taxon>
        <taxon>Muroidea</taxon>
        <taxon>Muridae</taxon>
        <taxon>Murinae</taxon>
        <taxon>Mus</taxon>
        <taxon>Mus</taxon>
    </lineage>
</organism>
<accession>Q7TQ40</accession>
<accession>Q9EQW1</accession>